<protein>
    <recommendedName>
        <fullName evidence="1">CCA-adding enzyme</fullName>
        <ecNumber evidence="1">2.7.7.72</ecNumber>
    </recommendedName>
    <alternativeName>
        <fullName evidence="1">CCA tRNA nucleotidyltransferase</fullName>
    </alternativeName>
    <alternativeName>
        <fullName evidence="1">tRNA CCA-pyrophosphorylase</fullName>
    </alternativeName>
    <alternativeName>
        <fullName evidence="1">tRNA adenylyl-/cytidylyl- transferase</fullName>
    </alternativeName>
    <alternativeName>
        <fullName evidence="1">tRNA nucleotidyltransferase</fullName>
    </alternativeName>
    <alternativeName>
        <fullName evidence="1">tRNA-NT</fullName>
    </alternativeName>
</protein>
<dbReference type="EC" id="2.7.7.72" evidence="1"/>
<dbReference type="EMBL" id="BA000002">
    <property type="protein sequence ID" value="BAA80794.2"/>
    <property type="molecule type" value="Genomic_DNA"/>
</dbReference>
<dbReference type="PIR" id="E72563">
    <property type="entry name" value="E72563"/>
</dbReference>
<dbReference type="RefSeq" id="WP_010866595.1">
    <property type="nucleotide sequence ID" value="NC_000854.2"/>
</dbReference>
<dbReference type="SMR" id="Q9YB04"/>
<dbReference type="STRING" id="272557.APE_1791.1"/>
<dbReference type="EnsemblBacteria" id="BAA80794">
    <property type="protein sequence ID" value="BAA80794"/>
    <property type="gene ID" value="APE_1791.1"/>
</dbReference>
<dbReference type="GeneID" id="1446242"/>
<dbReference type="KEGG" id="ape:APE_1791.1"/>
<dbReference type="PATRIC" id="fig|272557.25.peg.1200"/>
<dbReference type="eggNOG" id="arCOG04249">
    <property type="taxonomic scope" value="Archaea"/>
</dbReference>
<dbReference type="Proteomes" id="UP000002518">
    <property type="component" value="Chromosome"/>
</dbReference>
<dbReference type="GO" id="GO:0005524">
    <property type="term" value="F:ATP binding"/>
    <property type="evidence" value="ECO:0007669"/>
    <property type="project" value="UniProtKB-UniRule"/>
</dbReference>
<dbReference type="GO" id="GO:0004810">
    <property type="term" value="F:CCA tRNA nucleotidyltransferase activity"/>
    <property type="evidence" value="ECO:0007669"/>
    <property type="project" value="UniProtKB-UniRule"/>
</dbReference>
<dbReference type="GO" id="GO:0000287">
    <property type="term" value="F:magnesium ion binding"/>
    <property type="evidence" value="ECO:0007669"/>
    <property type="project" value="UniProtKB-UniRule"/>
</dbReference>
<dbReference type="GO" id="GO:0000049">
    <property type="term" value="F:tRNA binding"/>
    <property type="evidence" value="ECO:0007669"/>
    <property type="project" value="UniProtKB-UniRule"/>
</dbReference>
<dbReference type="GO" id="GO:0042245">
    <property type="term" value="P:RNA repair"/>
    <property type="evidence" value="ECO:0007669"/>
    <property type="project" value="UniProtKB-KW"/>
</dbReference>
<dbReference type="GO" id="GO:0001680">
    <property type="term" value="P:tRNA 3'-terminal CCA addition"/>
    <property type="evidence" value="ECO:0007669"/>
    <property type="project" value="UniProtKB-UniRule"/>
</dbReference>
<dbReference type="CDD" id="cd05400">
    <property type="entry name" value="NT_2-5OAS_ClassI-CCAase"/>
    <property type="match status" value="1"/>
</dbReference>
<dbReference type="Gene3D" id="3.30.460.10">
    <property type="entry name" value="Beta Polymerase, domain 2"/>
    <property type="match status" value="1"/>
</dbReference>
<dbReference type="Gene3D" id="1.10.1410.30">
    <property type="entry name" value="CCA tRNA nucleotidyltransferase, domain 2"/>
    <property type="match status" value="1"/>
</dbReference>
<dbReference type="Gene3D" id="3.30.70.590">
    <property type="entry name" value="Poly(A) polymerase predicted RNA binding domain"/>
    <property type="match status" value="1"/>
</dbReference>
<dbReference type="HAMAP" id="MF_01264">
    <property type="entry name" value="CCA_arch"/>
    <property type="match status" value="1"/>
</dbReference>
<dbReference type="InterPro" id="IPR008229">
    <property type="entry name" value="CCA-adding_arc"/>
</dbReference>
<dbReference type="InterPro" id="IPR042090">
    <property type="entry name" value="CCA_tRNA_nucleotrans_2"/>
</dbReference>
<dbReference type="InterPro" id="IPR006116">
    <property type="entry name" value="NT_2-5OAS_ClassI-CCAase"/>
</dbReference>
<dbReference type="InterPro" id="IPR043519">
    <property type="entry name" value="NT_sf"/>
</dbReference>
<dbReference type="InterPro" id="IPR011068">
    <property type="entry name" value="NuclTrfase_I-like_C"/>
</dbReference>
<dbReference type="InterPro" id="IPR002934">
    <property type="entry name" value="Polymerase_NTP_transf_dom"/>
</dbReference>
<dbReference type="InterPro" id="IPR015329">
    <property type="entry name" value="tRNA_NucTransf2"/>
</dbReference>
<dbReference type="NCBIfam" id="TIGR03671">
    <property type="entry name" value="cca_archaeal"/>
    <property type="match status" value="1"/>
</dbReference>
<dbReference type="PANTHER" id="PTHR39643">
    <property type="entry name" value="CCA-ADDING ENZYME"/>
    <property type="match status" value="1"/>
</dbReference>
<dbReference type="PANTHER" id="PTHR39643:SF1">
    <property type="entry name" value="CCA-ADDING ENZYME"/>
    <property type="match status" value="1"/>
</dbReference>
<dbReference type="Pfam" id="PF01909">
    <property type="entry name" value="NTP_transf_2"/>
    <property type="match status" value="1"/>
</dbReference>
<dbReference type="Pfam" id="PF09249">
    <property type="entry name" value="tRNA_NucTransf2"/>
    <property type="match status" value="1"/>
</dbReference>
<dbReference type="PIRSF" id="PIRSF005335">
    <property type="entry name" value="CCA_arch"/>
    <property type="match status" value="1"/>
</dbReference>
<dbReference type="SUPFAM" id="SSF81301">
    <property type="entry name" value="Nucleotidyltransferase"/>
    <property type="match status" value="1"/>
</dbReference>
<dbReference type="SUPFAM" id="SSF55003">
    <property type="entry name" value="PAP/Archaeal CCA-adding enzyme, C-terminal domain"/>
    <property type="match status" value="1"/>
</dbReference>
<dbReference type="SUPFAM" id="SSF81631">
    <property type="entry name" value="PAP/OAS1 substrate-binding domain"/>
    <property type="match status" value="1"/>
</dbReference>
<reference key="1">
    <citation type="journal article" date="1999" name="DNA Res.">
        <title>Complete genome sequence of an aerobic hyper-thermophilic crenarchaeon, Aeropyrum pernix K1.</title>
        <authorList>
            <person name="Kawarabayasi Y."/>
            <person name="Hino Y."/>
            <person name="Horikawa H."/>
            <person name="Yamazaki S."/>
            <person name="Haikawa Y."/>
            <person name="Jin-no K."/>
            <person name="Takahashi M."/>
            <person name="Sekine M."/>
            <person name="Baba S."/>
            <person name="Ankai A."/>
            <person name="Kosugi H."/>
            <person name="Hosoyama A."/>
            <person name="Fukui S."/>
            <person name="Nagai Y."/>
            <person name="Nishijima K."/>
            <person name="Nakazawa H."/>
            <person name="Takamiya M."/>
            <person name="Masuda S."/>
            <person name="Funahashi T."/>
            <person name="Tanaka T."/>
            <person name="Kudoh Y."/>
            <person name="Yamazaki J."/>
            <person name="Kushida N."/>
            <person name="Oguchi A."/>
            <person name="Aoki K."/>
            <person name="Kubota K."/>
            <person name="Nakamura Y."/>
            <person name="Nomura N."/>
            <person name="Sako Y."/>
            <person name="Kikuchi H."/>
        </authorList>
    </citation>
    <scope>NUCLEOTIDE SEQUENCE [LARGE SCALE GENOMIC DNA]</scope>
    <source>
        <strain>ATCC 700893 / DSM 11879 / JCM 9820 / NBRC 100138 / K1</strain>
    </source>
</reference>
<name>CCA_AERPE</name>
<feature type="chain" id="PRO_0000139064" description="CCA-adding enzyme">
    <location>
        <begin position="1"/>
        <end position="465"/>
    </location>
</feature>
<feature type="binding site" evidence="1">
    <location>
        <position position="63"/>
    </location>
    <ligand>
        <name>ATP</name>
        <dbReference type="ChEBI" id="CHEBI:30616"/>
    </ligand>
</feature>
<feature type="binding site" evidence="1">
    <location>
        <position position="63"/>
    </location>
    <ligand>
        <name>CTP</name>
        <dbReference type="ChEBI" id="CHEBI:37563"/>
    </ligand>
</feature>
<feature type="binding site" evidence="1">
    <location>
        <position position="66"/>
    </location>
    <ligand>
        <name>ATP</name>
        <dbReference type="ChEBI" id="CHEBI:30616"/>
    </ligand>
</feature>
<feature type="binding site" evidence="1">
    <location>
        <position position="66"/>
    </location>
    <ligand>
        <name>CTP</name>
        <dbReference type="ChEBI" id="CHEBI:37563"/>
    </ligand>
</feature>
<feature type="binding site" evidence="1">
    <location>
        <position position="75"/>
    </location>
    <ligand>
        <name>Mg(2+)</name>
        <dbReference type="ChEBI" id="CHEBI:18420"/>
    </ligand>
</feature>
<feature type="binding site" evidence="1">
    <location>
        <position position="77"/>
    </location>
    <ligand>
        <name>Mg(2+)</name>
        <dbReference type="ChEBI" id="CHEBI:18420"/>
    </ligand>
</feature>
<feature type="binding site" evidence="1">
    <location>
        <position position="127"/>
    </location>
    <ligand>
        <name>Mg(2+)</name>
        <dbReference type="ChEBI" id="CHEBI:18420"/>
    </ligand>
</feature>
<feature type="binding site" evidence="1">
    <location>
        <position position="149"/>
    </location>
    <ligand>
        <name>ATP</name>
        <dbReference type="ChEBI" id="CHEBI:30616"/>
    </ligand>
</feature>
<feature type="binding site" evidence="1">
    <location>
        <position position="149"/>
    </location>
    <ligand>
        <name>CTP</name>
        <dbReference type="ChEBI" id="CHEBI:37563"/>
    </ligand>
</feature>
<feature type="binding site" evidence="1">
    <location>
        <position position="171"/>
    </location>
    <ligand>
        <name>ATP</name>
        <dbReference type="ChEBI" id="CHEBI:30616"/>
    </ligand>
</feature>
<feature type="binding site" evidence="1">
    <location>
        <position position="171"/>
    </location>
    <ligand>
        <name>CTP</name>
        <dbReference type="ChEBI" id="CHEBI:37563"/>
    </ligand>
</feature>
<feature type="binding site" evidence="1">
    <location>
        <position position="180"/>
    </location>
    <ligand>
        <name>ATP</name>
        <dbReference type="ChEBI" id="CHEBI:30616"/>
    </ligand>
</feature>
<feature type="binding site" evidence="1">
    <location>
        <position position="180"/>
    </location>
    <ligand>
        <name>CTP</name>
        <dbReference type="ChEBI" id="CHEBI:37563"/>
    </ligand>
</feature>
<sequence>MRGASGESVLPEDLRSRVLERIRPTRLQFSMLGRLYSLVARALEECEDLRLSIPSYRVELVGSAAKGTLLRDKWEVDVFLLLDAPREEVRRLGESLLRSCLGGRLPYYFKYSEHPYATVSLMGMQADVVPAPLAVDPRDAVGVERTPFHTRYVRSRLEERPWLVDDILLFKSFLKGIGVYGAETRVGGFSGYLAEVLIIHHGGFEETVKAASSWRPPVMVDTTSGKADLDMLARRYPDSPIIVPDPVDPSRNTAASVTPKRLAELVHAANIFLRKPSPTFFHALQPGEPCRRTLPGVMVLMSGNYSDHPPDSVWGRLKRLGERLYRATKARGYPALSYSFYTDEALEAAVYIHMESPSRYPIEGRLGPPPWERERAARFTEKRLGEGGWVWIGDDGRLSGARPYTGSAAGDVERALATLPLPPGTRSYKVVTCPSTGPCGFPSYLEALRDPTPPWLRHVLGGCRS</sequence>
<comment type="function">
    <text evidence="1">Catalyzes the addition and repair of the essential 3'-terminal CCA sequence in tRNAs without using a nucleic acid template. Adds these three nucleotides in the order of C, C, and A to the tRNA nucleotide-73, using CTP and ATP as substrates and producing inorganic pyrophosphate. tRNA 3'-terminal CCA addition is required both for tRNA processing and repair. Also involved in tRNA surveillance by mediating tandem CCA addition to generate a CCACCA at the 3' terminus of unstable tRNAs. While stable tRNAs receive only 3'-terminal CCA, unstable tRNAs are marked with CCACCA and rapidly degraded.</text>
</comment>
<comment type="catalytic activity">
    <reaction evidence="1">
        <text>a tRNA precursor + 2 CTP + ATP = a tRNA with a 3' CCA end + 3 diphosphate</text>
        <dbReference type="Rhea" id="RHEA:14433"/>
        <dbReference type="Rhea" id="RHEA-COMP:10465"/>
        <dbReference type="Rhea" id="RHEA-COMP:10468"/>
        <dbReference type="ChEBI" id="CHEBI:30616"/>
        <dbReference type="ChEBI" id="CHEBI:33019"/>
        <dbReference type="ChEBI" id="CHEBI:37563"/>
        <dbReference type="ChEBI" id="CHEBI:74896"/>
        <dbReference type="ChEBI" id="CHEBI:83071"/>
        <dbReference type="EC" id="2.7.7.72"/>
    </reaction>
</comment>
<comment type="catalytic activity">
    <reaction evidence="1">
        <text>a tRNA with a 3' CCA end + 2 CTP + ATP = a tRNA with a 3' CCACCA end + 3 diphosphate</text>
        <dbReference type="Rhea" id="RHEA:76235"/>
        <dbReference type="Rhea" id="RHEA-COMP:10468"/>
        <dbReference type="Rhea" id="RHEA-COMP:18655"/>
        <dbReference type="ChEBI" id="CHEBI:30616"/>
        <dbReference type="ChEBI" id="CHEBI:33019"/>
        <dbReference type="ChEBI" id="CHEBI:37563"/>
        <dbReference type="ChEBI" id="CHEBI:83071"/>
        <dbReference type="ChEBI" id="CHEBI:195187"/>
    </reaction>
    <physiologicalReaction direction="left-to-right" evidence="1">
        <dbReference type="Rhea" id="RHEA:76236"/>
    </physiologicalReaction>
</comment>
<comment type="cofactor">
    <cofactor evidence="1">
        <name>Mg(2+)</name>
        <dbReference type="ChEBI" id="CHEBI:18420"/>
    </cofactor>
</comment>
<comment type="subunit">
    <text evidence="1">Homodimer.</text>
</comment>
<comment type="miscellaneous">
    <text evidence="1">A single active site specifically recognizes both ATP and CTP and is responsible for their addition.</text>
</comment>
<comment type="similarity">
    <text evidence="1">Belongs to the tRNA nucleotidyltransferase/poly(A) polymerase family. Archaeal CCA-adding enzyme subfamily.</text>
</comment>
<evidence type="ECO:0000255" key="1">
    <source>
        <dbReference type="HAMAP-Rule" id="MF_01264"/>
    </source>
</evidence>
<accession>Q9YB04</accession>
<keyword id="KW-0067">ATP-binding</keyword>
<keyword id="KW-0460">Magnesium</keyword>
<keyword id="KW-0479">Metal-binding</keyword>
<keyword id="KW-0547">Nucleotide-binding</keyword>
<keyword id="KW-0548">Nucleotidyltransferase</keyword>
<keyword id="KW-1185">Reference proteome</keyword>
<keyword id="KW-0692">RNA repair</keyword>
<keyword id="KW-0694">RNA-binding</keyword>
<keyword id="KW-0808">Transferase</keyword>
<keyword id="KW-0819">tRNA processing</keyword>
<gene>
    <name evidence="1" type="primary">cca</name>
    <name type="ordered locus">APE_1791.1</name>
</gene>
<organism>
    <name type="scientific">Aeropyrum pernix (strain ATCC 700893 / DSM 11879 / JCM 9820 / NBRC 100138 / K1)</name>
    <dbReference type="NCBI Taxonomy" id="272557"/>
    <lineage>
        <taxon>Archaea</taxon>
        <taxon>Thermoproteota</taxon>
        <taxon>Thermoprotei</taxon>
        <taxon>Desulfurococcales</taxon>
        <taxon>Desulfurococcaceae</taxon>
        <taxon>Aeropyrum</taxon>
    </lineage>
</organism>
<proteinExistence type="inferred from homology"/>